<accession>B9KLA5</accession>
<gene>
    <name evidence="1" type="primary">rpsH</name>
    <name type="ordered locus">RSKD131_0028</name>
</gene>
<proteinExistence type="inferred from homology"/>
<reference key="1">
    <citation type="journal article" date="2009" name="J. Bacteriol.">
        <title>Complete genome sequence of Rhodobacter sphaeroides KD131.</title>
        <authorList>
            <person name="Lim S.-K."/>
            <person name="Kim S.J."/>
            <person name="Cha S.H."/>
            <person name="Oh Y.-K."/>
            <person name="Rhee H.-J."/>
            <person name="Kim M.-S."/>
            <person name="Lee J.K."/>
        </authorList>
    </citation>
    <scope>NUCLEOTIDE SEQUENCE [LARGE SCALE GENOMIC DNA]</scope>
    <source>
        <strain>KD131 / KCTC 12085</strain>
    </source>
</reference>
<name>RS8_CERSK</name>
<comment type="function">
    <text evidence="1">One of the primary rRNA binding proteins, it binds directly to 16S rRNA central domain where it helps coordinate assembly of the platform of the 30S subunit.</text>
</comment>
<comment type="subunit">
    <text evidence="1">Part of the 30S ribosomal subunit. Contacts proteins S5 and S12.</text>
</comment>
<comment type="similarity">
    <text evidence="1">Belongs to the universal ribosomal protein uS8 family.</text>
</comment>
<protein>
    <recommendedName>
        <fullName evidence="1">Small ribosomal subunit protein uS8</fullName>
    </recommendedName>
    <alternativeName>
        <fullName evidence="2">30S ribosomal protein S8</fullName>
    </alternativeName>
</protein>
<keyword id="KW-0687">Ribonucleoprotein</keyword>
<keyword id="KW-0689">Ribosomal protein</keyword>
<keyword id="KW-0694">RNA-binding</keyword>
<keyword id="KW-0699">rRNA-binding</keyword>
<sequence>MNDPLGDMLTRIRNAQLRGKSTVSTPASRLRAWVLDVLQAEGYIRGYEKKETENGQGELVISLKYFEGTPVIRELKRVSKPGRRVYMATKDLPSVRNGLGVSIISTPKGVMSDASARSANVGGEVLCTVF</sequence>
<evidence type="ECO:0000255" key="1">
    <source>
        <dbReference type="HAMAP-Rule" id="MF_01302"/>
    </source>
</evidence>
<evidence type="ECO:0000305" key="2"/>
<dbReference type="EMBL" id="CP001150">
    <property type="protein sequence ID" value="ACL99887.1"/>
    <property type="molecule type" value="Genomic_DNA"/>
</dbReference>
<dbReference type="SMR" id="B9KLA5"/>
<dbReference type="KEGG" id="rsk:RSKD131_0028"/>
<dbReference type="HOGENOM" id="CLU_098428_0_0_5"/>
<dbReference type="GO" id="GO:1990904">
    <property type="term" value="C:ribonucleoprotein complex"/>
    <property type="evidence" value="ECO:0007669"/>
    <property type="project" value="UniProtKB-KW"/>
</dbReference>
<dbReference type="GO" id="GO:0005840">
    <property type="term" value="C:ribosome"/>
    <property type="evidence" value="ECO:0007669"/>
    <property type="project" value="UniProtKB-KW"/>
</dbReference>
<dbReference type="GO" id="GO:0019843">
    <property type="term" value="F:rRNA binding"/>
    <property type="evidence" value="ECO:0007669"/>
    <property type="project" value="UniProtKB-UniRule"/>
</dbReference>
<dbReference type="GO" id="GO:0003735">
    <property type="term" value="F:structural constituent of ribosome"/>
    <property type="evidence" value="ECO:0007669"/>
    <property type="project" value="InterPro"/>
</dbReference>
<dbReference type="GO" id="GO:0006412">
    <property type="term" value="P:translation"/>
    <property type="evidence" value="ECO:0007669"/>
    <property type="project" value="UniProtKB-UniRule"/>
</dbReference>
<dbReference type="FunFam" id="3.30.1370.30:FF:000002">
    <property type="entry name" value="30S ribosomal protein S8"/>
    <property type="match status" value="1"/>
</dbReference>
<dbReference type="FunFam" id="3.30.1490.10:FF:000001">
    <property type="entry name" value="30S ribosomal protein S8"/>
    <property type="match status" value="1"/>
</dbReference>
<dbReference type="Gene3D" id="3.30.1370.30">
    <property type="match status" value="1"/>
</dbReference>
<dbReference type="Gene3D" id="3.30.1490.10">
    <property type="match status" value="1"/>
</dbReference>
<dbReference type="HAMAP" id="MF_01302_B">
    <property type="entry name" value="Ribosomal_uS8_B"/>
    <property type="match status" value="1"/>
</dbReference>
<dbReference type="InterPro" id="IPR000630">
    <property type="entry name" value="Ribosomal_uS8"/>
</dbReference>
<dbReference type="InterPro" id="IPR047863">
    <property type="entry name" value="Ribosomal_uS8_CS"/>
</dbReference>
<dbReference type="InterPro" id="IPR035987">
    <property type="entry name" value="Ribosomal_uS8_sf"/>
</dbReference>
<dbReference type="NCBIfam" id="NF001109">
    <property type="entry name" value="PRK00136.1"/>
    <property type="match status" value="1"/>
</dbReference>
<dbReference type="PANTHER" id="PTHR11758">
    <property type="entry name" value="40S RIBOSOMAL PROTEIN S15A"/>
    <property type="match status" value="1"/>
</dbReference>
<dbReference type="Pfam" id="PF00410">
    <property type="entry name" value="Ribosomal_S8"/>
    <property type="match status" value="1"/>
</dbReference>
<dbReference type="SUPFAM" id="SSF56047">
    <property type="entry name" value="Ribosomal protein S8"/>
    <property type="match status" value="1"/>
</dbReference>
<dbReference type="PROSITE" id="PS00053">
    <property type="entry name" value="RIBOSOMAL_S8"/>
    <property type="match status" value="1"/>
</dbReference>
<feature type="chain" id="PRO_1000165348" description="Small ribosomal subunit protein uS8">
    <location>
        <begin position="1"/>
        <end position="130"/>
    </location>
</feature>
<organism>
    <name type="scientific">Cereibacter sphaeroides (strain KD131 / KCTC 12085)</name>
    <name type="common">Rhodobacter sphaeroides</name>
    <dbReference type="NCBI Taxonomy" id="557760"/>
    <lineage>
        <taxon>Bacteria</taxon>
        <taxon>Pseudomonadati</taxon>
        <taxon>Pseudomonadota</taxon>
        <taxon>Alphaproteobacteria</taxon>
        <taxon>Rhodobacterales</taxon>
        <taxon>Paracoccaceae</taxon>
        <taxon>Cereibacter</taxon>
    </lineage>
</organism>